<evidence type="ECO:0000250" key="1"/>
<evidence type="ECO:0000250" key="2">
    <source>
        <dbReference type="UniProtKB" id="P00441"/>
    </source>
</evidence>
<evidence type="ECO:0000250" key="3">
    <source>
        <dbReference type="UniProtKB" id="P08228"/>
    </source>
</evidence>
<evidence type="ECO:0000305" key="4"/>
<evidence type="ECO:0007829" key="5">
    <source>
        <dbReference type="PDB" id="7WWT"/>
    </source>
</evidence>
<evidence type="ECO:0007829" key="6">
    <source>
        <dbReference type="PDB" id="7WX0"/>
    </source>
</evidence>
<keyword id="KW-0002">3D-structure</keyword>
<keyword id="KW-0007">Acetylation</keyword>
<keyword id="KW-0049">Antioxidant</keyword>
<keyword id="KW-0186">Copper</keyword>
<keyword id="KW-0963">Cytoplasm</keyword>
<keyword id="KW-1015">Disulfide bond</keyword>
<keyword id="KW-0449">Lipoprotein</keyword>
<keyword id="KW-0479">Metal-binding</keyword>
<keyword id="KW-0539">Nucleus</keyword>
<keyword id="KW-0560">Oxidoreductase</keyword>
<keyword id="KW-0564">Palmitate</keyword>
<keyword id="KW-0597">Phosphoprotein</keyword>
<keyword id="KW-1185">Reference proteome</keyword>
<keyword id="KW-0862">Zinc</keyword>
<sequence length="153" mass="15913">MEMKAVCVLKGQGPVEGTIHFVQKGSGPVVVSGTITGLTEGEHGFHVHQFEDXTQGCTSAGPHFNPLSKKHGGPKDQERHVGDLGNVTAGKDGVAIVSIEDSLIALSGDYSIIGRTMVVHEKRDDLGKGDNEESTQTGNAGSRLACGVIGIAQ</sequence>
<reference key="1">
    <citation type="journal article" date="2002" name="J. Hered.">
        <title>Structure, chromosomal location, and analysis of the canine Cu/Zn superoxide dismutase (SOD1) gene.</title>
        <authorList>
            <person name="Green S.L."/>
            <person name="Tolwani R.J."/>
            <person name="Varma S."/>
            <person name="Quignon P."/>
            <person name="Galibert F."/>
            <person name="Cork L.C."/>
        </authorList>
    </citation>
    <scope>NUCLEOTIDE SEQUENCE [MRNA]</scope>
</reference>
<organism>
    <name type="scientific">Canis lupus familiaris</name>
    <name type="common">Dog</name>
    <name type="synonym">Canis familiaris</name>
    <dbReference type="NCBI Taxonomy" id="9615"/>
    <lineage>
        <taxon>Eukaryota</taxon>
        <taxon>Metazoa</taxon>
        <taxon>Chordata</taxon>
        <taxon>Craniata</taxon>
        <taxon>Vertebrata</taxon>
        <taxon>Euteleostomi</taxon>
        <taxon>Mammalia</taxon>
        <taxon>Eutheria</taxon>
        <taxon>Laurasiatheria</taxon>
        <taxon>Carnivora</taxon>
        <taxon>Caniformia</taxon>
        <taxon>Canidae</taxon>
        <taxon>Canis</taxon>
    </lineage>
</organism>
<accession>Q8WNN6</accession>
<protein>
    <recommendedName>
        <fullName evidence="2">Superoxide dismutase [Cu-Zn]</fullName>
        <ecNumber evidence="2">1.15.1.1</ecNumber>
    </recommendedName>
</protein>
<name>SODC_CANLF</name>
<proteinExistence type="evidence at protein level"/>
<gene>
    <name evidence="2" type="primary">SOD1</name>
</gene>
<feature type="chain" id="PRO_0000164051" description="Superoxide dismutase [Cu-Zn]">
    <location>
        <begin position="1"/>
        <end position="153"/>
    </location>
</feature>
<feature type="binding site" evidence="1">
    <location>
        <position position="46"/>
    </location>
    <ligand>
        <name>Cu cation</name>
        <dbReference type="ChEBI" id="CHEBI:23378"/>
        <note>catalytic</note>
    </ligand>
</feature>
<feature type="binding site" evidence="1">
    <location>
        <position position="48"/>
    </location>
    <ligand>
        <name>Cu cation</name>
        <dbReference type="ChEBI" id="CHEBI:23378"/>
        <note>catalytic</note>
    </ligand>
</feature>
<feature type="binding site" evidence="1">
    <location>
        <position position="63"/>
    </location>
    <ligand>
        <name>Cu cation</name>
        <dbReference type="ChEBI" id="CHEBI:23378"/>
        <note>catalytic</note>
    </ligand>
</feature>
<feature type="binding site" evidence="1">
    <location>
        <position position="63"/>
    </location>
    <ligand>
        <name>Zn(2+)</name>
        <dbReference type="ChEBI" id="CHEBI:29105"/>
        <note>structural</note>
    </ligand>
</feature>
<feature type="binding site" evidence="1">
    <location>
        <position position="71"/>
    </location>
    <ligand>
        <name>Zn(2+)</name>
        <dbReference type="ChEBI" id="CHEBI:29105"/>
        <note>structural</note>
    </ligand>
</feature>
<feature type="binding site" evidence="1">
    <location>
        <position position="80"/>
    </location>
    <ligand>
        <name>Zn(2+)</name>
        <dbReference type="ChEBI" id="CHEBI:29105"/>
        <note>structural</note>
    </ligand>
</feature>
<feature type="binding site" evidence="1">
    <location>
        <position position="83"/>
    </location>
    <ligand>
        <name>Zn(2+)</name>
        <dbReference type="ChEBI" id="CHEBI:29105"/>
        <note>structural</note>
    </ligand>
</feature>
<feature type="binding site" evidence="1">
    <location>
        <position position="120"/>
    </location>
    <ligand>
        <name>Cu cation</name>
        <dbReference type="ChEBI" id="CHEBI:23378"/>
        <note>catalytic</note>
    </ligand>
</feature>
<feature type="modified residue" description="N6-succinyllysine" evidence="3">
    <location>
        <position position="4"/>
    </location>
</feature>
<feature type="modified residue" description="N6-succinyllysine" evidence="3">
    <location>
        <position position="10"/>
    </location>
</feature>
<feature type="modified residue" description="N6-succinyllysine" evidence="3">
    <location>
        <position position="91"/>
    </location>
</feature>
<feature type="modified residue" description="Phosphoserine" evidence="2">
    <location>
        <position position="98"/>
    </location>
</feature>
<feature type="modified residue" description="Phosphoserine" evidence="2">
    <location>
        <position position="102"/>
    </location>
</feature>
<feature type="modified residue" description="Phosphoserine" evidence="3">
    <location>
        <position position="107"/>
    </location>
</feature>
<feature type="modified residue" description="N6-acetyllysine; alternate" evidence="2">
    <location>
        <position position="122"/>
    </location>
</feature>
<feature type="modified residue" description="N6-succinyllysine; alternate" evidence="2">
    <location>
        <position position="122"/>
    </location>
</feature>
<feature type="lipid moiety-binding region" description="S-palmitoyl cysteine" evidence="1">
    <location>
        <position position="7"/>
    </location>
</feature>
<feature type="disulfide bond" evidence="1">
    <location>
        <begin position="57"/>
        <end position="146"/>
    </location>
</feature>
<feature type="strand" evidence="6">
    <location>
        <begin position="2"/>
        <end position="10"/>
    </location>
</feature>
<feature type="strand" evidence="6">
    <location>
        <begin position="12"/>
        <end position="14"/>
    </location>
</feature>
<feature type="strand" evidence="6">
    <location>
        <begin position="16"/>
        <end position="24"/>
    </location>
</feature>
<feature type="strand" evidence="6">
    <location>
        <begin position="29"/>
        <end position="37"/>
    </location>
</feature>
<feature type="strand" evidence="6">
    <location>
        <begin position="40"/>
        <end position="49"/>
    </location>
</feature>
<feature type="helix" evidence="6">
    <location>
        <begin position="56"/>
        <end position="60"/>
    </location>
</feature>
<feature type="strand" evidence="5">
    <location>
        <begin position="77"/>
        <end position="79"/>
    </location>
</feature>
<feature type="strand" evidence="6">
    <location>
        <begin position="83"/>
        <end position="89"/>
    </location>
</feature>
<feature type="strand" evidence="6">
    <location>
        <begin position="95"/>
        <end position="108"/>
    </location>
</feature>
<feature type="strand" evidence="6">
    <location>
        <begin position="115"/>
        <end position="122"/>
    </location>
</feature>
<feature type="strand" evidence="6">
    <location>
        <begin position="129"/>
        <end position="131"/>
    </location>
</feature>
<feature type="helix" evidence="6">
    <location>
        <begin position="132"/>
        <end position="137"/>
    </location>
</feature>
<feature type="strand" evidence="6">
    <location>
        <begin position="142"/>
        <end position="148"/>
    </location>
</feature>
<dbReference type="EC" id="1.15.1.1" evidence="2"/>
<dbReference type="EMBL" id="AF346417">
    <property type="protein sequence ID" value="AAL61608.1"/>
    <property type="molecule type" value="mRNA"/>
</dbReference>
<dbReference type="RefSeq" id="NP_001003035.1">
    <property type="nucleotide sequence ID" value="NM_001003035.1"/>
</dbReference>
<dbReference type="PDB" id="7WWT">
    <property type="method" value="X-ray"/>
    <property type="resolution" value="1.60 A"/>
    <property type="chains" value="A/B=1-153"/>
</dbReference>
<dbReference type="PDB" id="7WWY">
    <property type="method" value="X-ray"/>
    <property type="resolution" value="1.50 A"/>
    <property type="chains" value="A/B=1-153"/>
</dbReference>
<dbReference type="PDB" id="7WX0">
    <property type="method" value="X-ray"/>
    <property type="resolution" value="1.40 A"/>
    <property type="chains" value="A/B=1-153"/>
</dbReference>
<dbReference type="PDB" id="7WX1">
    <property type="method" value="X-ray"/>
    <property type="resolution" value="1.65 A"/>
    <property type="chains" value="A/B=1-153"/>
</dbReference>
<dbReference type="PDB" id="8ZD5">
    <property type="method" value="X-ray"/>
    <property type="resolution" value="2.89 A"/>
    <property type="chains" value="A/D/G/J=1-153"/>
</dbReference>
<dbReference type="PDB" id="8ZD6">
    <property type="method" value="X-ray"/>
    <property type="resolution" value="3.29 A"/>
    <property type="chains" value="A/D/G/J=1-153"/>
</dbReference>
<dbReference type="PDBsum" id="7WWT"/>
<dbReference type="PDBsum" id="7WWY"/>
<dbReference type="PDBsum" id="7WX0"/>
<dbReference type="PDBsum" id="7WX1"/>
<dbReference type="PDBsum" id="8ZD5"/>
<dbReference type="PDBsum" id="8ZD6"/>
<dbReference type="SMR" id="Q8WNN6"/>
<dbReference type="FunCoup" id="Q8WNN6">
    <property type="interactions" value="1227"/>
</dbReference>
<dbReference type="STRING" id="9615.ENSCAFP00000013012"/>
<dbReference type="PaxDb" id="9615-ENSCAFP00000013012"/>
<dbReference type="GeneID" id="403559"/>
<dbReference type="KEGG" id="cfa:403559"/>
<dbReference type="CTD" id="6647"/>
<dbReference type="InParanoid" id="Q8WNN6"/>
<dbReference type="OrthoDB" id="2015551at2759"/>
<dbReference type="Proteomes" id="UP000002254">
    <property type="component" value="Unplaced"/>
</dbReference>
<dbReference type="Proteomes" id="UP000694429">
    <property type="component" value="Unplaced"/>
</dbReference>
<dbReference type="Proteomes" id="UP000694542">
    <property type="component" value="Unplaced"/>
</dbReference>
<dbReference type="Proteomes" id="UP000805418">
    <property type="component" value="Unplaced"/>
</dbReference>
<dbReference type="GO" id="GO:0005829">
    <property type="term" value="C:cytosol"/>
    <property type="evidence" value="ECO:0000318"/>
    <property type="project" value="GO_Central"/>
</dbReference>
<dbReference type="GO" id="GO:0005739">
    <property type="term" value="C:mitochondrion"/>
    <property type="evidence" value="ECO:0000318"/>
    <property type="project" value="GO_Central"/>
</dbReference>
<dbReference type="GO" id="GO:0005634">
    <property type="term" value="C:nucleus"/>
    <property type="evidence" value="ECO:0000318"/>
    <property type="project" value="GO_Central"/>
</dbReference>
<dbReference type="GO" id="GO:0005777">
    <property type="term" value="C:peroxisome"/>
    <property type="evidence" value="ECO:0000318"/>
    <property type="project" value="GO_Central"/>
</dbReference>
<dbReference type="GO" id="GO:0005507">
    <property type="term" value="F:copper ion binding"/>
    <property type="evidence" value="ECO:0000318"/>
    <property type="project" value="GO_Central"/>
</dbReference>
<dbReference type="GO" id="GO:0004784">
    <property type="term" value="F:superoxide dismutase activity"/>
    <property type="evidence" value="ECO:0000250"/>
    <property type="project" value="UniProtKB"/>
</dbReference>
<dbReference type="GO" id="GO:0072593">
    <property type="term" value="P:reactive oxygen species metabolic process"/>
    <property type="evidence" value="ECO:0000250"/>
    <property type="project" value="UniProtKB"/>
</dbReference>
<dbReference type="GO" id="GO:0019430">
    <property type="term" value="P:removal of superoxide radicals"/>
    <property type="evidence" value="ECO:0000250"/>
    <property type="project" value="UniProtKB"/>
</dbReference>
<dbReference type="CDD" id="cd00305">
    <property type="entry name" value="Cu-Zn_Superoxide_Dismutase"/>
    <property type="match status" value="1"/>
</dbReference>
<dbReference type="FunFam" id="2.60.40.200:FF:000001">
    <property type="entry name" value="Superoxide dismutase [Cu-Zn]"/>
    <property type="match status" value="1"/>
</dbReference>
<dbReference type="Gene3D" id="2.60.40.200">
    <property type="entry name" value="Superoxide dismutase, copper/zinc binding domain"/>
    <property type="match status" value="1"/>
</dbReference>
<dbReference type="InterPro" id="IPR036423">
    <property type="entry name" value="SOD-like_Cu/Zn_dom_sf"/>
</dbReference>
<dbReference type="InterPro" id="IPR024134">
    <property type="entry name" value="SOD_Cu/Zn_/chaperone"/>
</dbReference>
<dbReference type="InterPro" id="IPR018152">
    <property type="entry name" value="SOD_Cu/Zn_BS"/>
</dbReference>
<dbReference type="InterPro" id="IPR001424">
    <property type="entry name" value="SOD_Cu_Zn_dom"/>
</dbReference>
<dbReference type="PANTHER" id="PTHR10003">
    <property type="entry name" value="SUPEROXIDE DISMUTASE CU-ZN -RELATED"/>
    <property type="match status" value="1"/>
</dbReference>
<dbReference type="Pfam" id="PF00080">
    <property type="entry name" value="Sod_Cu"/>
    <property type="match status" value="1"/>
</dbReference>
<dbReference type="PRINTS" id="PR00068">
    <property type="entry name" value="CUZNDISMTASE"/>
</dbReference>
<dbReference type="SUPFAM" id="SSF49329">
    <property type="entry name" value="Cu,Zn superoxide dismutase-like"/>
    <property type="match status" value="1"/>
</dbReference>
<dbReference type="PROSITE" id="PS00332">
    <property type="entry name" value="SOD_CU_ZN_2"/>
    <property type="match status" value="1"/>
</dbReference>
<comment type="function">
    <text evidence="1">Destroys radicals which are normally produced within the cells and which are toxic to biological systems.</text>
</comment>
<comment type="catalytic activity">
    <reaction>
        <text>2 superoxide + 2 H(+) = H2O2 + O2</text>
        <dbReference type="Rhea" id="RHEA:20696"/>
        <dbReference type="ChEBI" id="CHEBI:15378"/>
        <dbReference type="ChEBI" id="CHEBI:15379"/>
        <dbReference type="ChEBI" id="CHEBI:16240"/>
        <dbReference type="ChEBI" id="CHEBI:18421"/>
        <dbReference type="EC" id="1.15.1.1"/>
    </reaction>
</comment>
<comment type="cofactor">
    <cofactor evidence="1">
        <name>Cu cation</name>
        <dbReference type="ChEBI" id="CHEBI:23378"/>
    </cofactor>
    <text evidence="1">Binds 1 copper ion per subunit.</text>
</comment>
<comment type="cofactor">
    <cofactor evidence="1">
        <name>Zn(2+)</name>
        <dbReference type="ChEBI" id="CHEBI:29105"/>
    </cofactor>
    <text evidence="1">Binds 1 zinc ion per subunit.</text>
</comment>
<comment type="subunit">
    <text evidence="2 3">Homodimer; non-disulfide-linked (By similarity). Heterodimer with SOD1. The heterodimer CCS:SOD1 interacts with SLC31A1; this heterotrimer is Cu(1+)-mediated and its maintenance is regulated through SOD1 activation (By similarity).</text>
</comment>
<comment type="subcellular location">
    <subcellularLocation>
        <location evidence="1">Cytoplasm</location>
    </subcellularLocation>
    <subcellularLocation>
        <location evidence="1">Nucleus</location>
    </subcellularLocation>
</comment>
<comment type="PTM">
    <text evidence="1">Palmitoylation helps nuclear targeting and decreases catalytic activity.</text>
</comment>
<comment type="PTM">
    <text evidence="2">Succinylation, adjacent to copper catalytic site, probably inhibits activity. Desuccinylation by SIRT5 enhances activity.</text>
</comment>
<comment type="similarity">
    <text evidence="4">Belongs to the Cu-Zn superoxide dismutase family.</text>
</comment>